<evidence type="ECO:0000250" key="1"/>
<evidence type="ECO:0000255" key="2"/>
<evidence type="ECO:0000305" key="3"/>
<gene>
    <name type="primary">orcD</name>
    <name type="synonym">orc4</name>
    <name type="ORF">DDB_G0271562</name>
</gene>
<dbReference type="EMBL" id="AAFI02000006">
    <property type="protein sequence ID" value="EAL71645.1"/>
    <property type="molecule type" value="Genomic_DNA"/>
</dbReference>
<dbReference type="RefSeq" id="XP_645616.1">
    <property type="nucleotide sequence ID" value="XM_640524.1"/>
</dbReference>
<dbReference type="SMR" id="Q86AD6"/>
<dbReference type="FunCoup" id="Q86AD6">
    <property type="interactions" value="574"/>
</dbReference>
<dbReference type="STRING" id="44689.Q86AD6"/>
<dbReference type="PaxDb" id="44689-DDB0233111"/>
<dbReference type="EnsemblProtists" id="EAL71645">
    <property type="protein sequence ID" value="EAL71645"/>
    <property type="gene ID" value="DDB_G0271562"/>
</dbReference>
<dbReference type="GeneID" id="8618071"/>
<dbReference type="KEGG" id="ddi:DDB_G0271562"/>
<dbReference type="dictyBase" id="DDB_G0271562">
    <property type="gene designation" value="orcD"/>
</dbReference>
<dbReference type="VEuPathDB" id="AmoebaDB:DDB_G0271562"/>
<dbReference type="eggNOG" id="KOG2228">
    <property type="taxonomic scope" value="Eukaryota"/>
</dbReference>
<dbReference type="HOGENOM" id="CLU_623218_0_0_1"/>
<dbReference type="InParanoid" id="Q86AD6"/>
<dbReference type="OMA" id="AFTFQRN"/>
<dbReference type="PhylomeDB" id="Q86AD6"/>
<dbReference type="Reactome" id="R-DDI-68616">
    <property type="pathway name" value="Assembly of the ORC complex at the origin of replication"/>
</dbReference>
<dbReference type="Reactome" id="R-DDI-68689">
    <property type="pathway name" value="CDC6 association with the ORC:origin complex"/>
</dbReference>
<dbReference type="Reactome" id="R-DDI-68962">
    <property type="pathway name" value="Activation of the pre-replicative complex"/>
</dbReference>
<dbReference type="PRO" id="PR:Q86AD6"/>
<dbReference type="Proteomes" id="UP000002195">
    <property type="component" value="Chromosome 2"/>
</dbReference>
<dbReference type="GO" id="GO:0005664">
    <property type="term" value="C:nuclear origin of replication recognition complex"/>
    <property type="evidence" value="ECO:0000318"/>
    <property type="project" value="GO_Central"/>
</dbReference>
<dbReference type="GO" id="GO:0005634">
    <property type="term" value="C:nucleus"/>
    <property type="evidence" value="ECO:0000250"/>
    <property type="project" value="UniProtKB"/>
</dbReference>
<dbReference type="GO" id="GO:0005524">
    <property type="term" value="F:ATP binding"/>
    <property type="evidence" value="ECO:0007669"/>
    <property type="project" value="UniProtKB-KW"/>
</dbReference>
<dbReference type="GO" id="GO:0016887">
    <property type="term" value="F:ATP hydrolysis activity"/>
    <property type="evidence" value="ECO:0007669"/>
    <property type="project" value="InterPro"/>
</dbReference>
<dbReference type="GO" id="GO:0003688">
    <property type="term" value="F:DNA replication origin binding"/>
    <property type="evidence" value="ECO:0000250"/>
    <property type="project" value="UniProtKB"/>
</dbReference>
<dbReference type="GO" id="GO:0000166">
    <property type="term" value="F:nucleotide binding"/>
    <property type="evidence" value="ECO:0000250"/>
    <property type="project" value="UniProtKB"/>
</dbReference>
<dbReference type="GO" id="GO:0006270">
    <property type="term" value="P:DNA replication initiation"/>
    <property type="evidence" value="ECO:0000250"/>
    <property type="project" value="UniProtKB"/>
</dbReference>
<dbReference type="FunFam" id="3.40.50.300:FF:003015">
    <property type="entry name" value="Origin recognition complex subunit 4"/>
    <property type="match status" value="1"/>
</dbReference>
<dbReference type="Gene3D" id="3.40.50.300">
    <property type="entry name" value="P-loop containing nucleotide triphosphate hydrolases"/>
    <property type="match status" value="1"/>
</dbReference>
<dbReference type="InterPro" id="IPR049945">
    <property type="entry name" value="AAA_22"/>
</dbReference>
<dbReference type="InterPro" id="IPR016527">
    <property type="entry name" value="ORC4"/>
</dbReference>
<dbReference type="InterPro" id="IPR032705">
    <property type="entry name" value="ORC4_C"/>
</dbReference>
<dbReference type="InterPro" id="IPR027417">
    <property type="entry name" value="P-loop_NTPase"/>
</dbReference>
<dbReference type="PANTHER" id="PTHR12087">
    <property type="entry name" value="ORIGIN RECOGNITION COMPLEX SUBUNIT 4"/>
    <property type="match status" value="1"/>
</dbReference>
<dbReference type="PANTHER" id="PTHR12087:SF0">
    <property type="entry name" value="ORIGIN RECOGNITION COMPLEX SUBUNIT 4"/>
    <property type="match status" value="1"/>
</dbReference>
<dbReference type="Pfam" id="PF13401">
    <property type="entry name" value="AAA_22"/>
    <property type="match status" value="1"/>
</dbReference>
<dbReference type="Pfam" id="PF14629">
    <property type="entry name" value="ORC4_C"/>
    <property type="match status" value="1"/>
</dbReference>
<dbReference type="PIRSF" id="PIRSF007858">
    <property type="entry name" value="ORC4"/>
    <property type="match status" value="1"/>
</dbReference>
<dbReference type="SUPFAM" id="SSF52540">
    <property type="entry name" value="P-loop containing nucleoside triphosphate hydrolases"/>
    <property type="match status" value="1"/>
</dbReference>
<protein>
    <recommendedName>
        <fullName>Origin recognition complex subunit 4</fullName>
    </recommendedName>
    <alternativeName>
        <fullName>Origin replication complex subunit D</fullName>
    </alternativeName>
</protein>
<accession>Q86AD6</accession>
<accession>Q55AT0</accession>
<reference key="1">
    <citation type="journal article" date="2002" name="Nature">
        <title>Sequence and analysis of chromosome 2 of Dictyostelium discoideum.</title>
        <authorList>
            <person name="Gloeckner G."/>
            <person name="Eichinger L."/>
            <person name="Szafranski K."/>
            <person name="Pachebat J.A."/>
            <person name="Bankier A.T."/>
            <person name="Dear P.H."/>
            <person name="Lehmann R."/>
            <person name="Baumgart C."/>
            <person name="Parra G."/>
            <person name="Abril J.F."/>
            <person name="Guigo R."/>
            <person name="Kumpf K."/>
            <person name="Tunggal B."/>
            <person name="Cox E.C."/>
            <person name="Quail M.A."/>
            <person name="Platzer M."/>
            <person name="Rosenthal A."/>
            <person name="Noegel A.A."/>
        </authorList>
    </citation>
    <scope>NUCLEOTIDE SEQUENCE [LARGE SCALE GENOMIC DNA]</scope>
    <source>
        <strain>AX4</strain>
    </source>
</reference>
<reference key="2">
    <citation type="journal article" date="2005" name="Nature">
        <title>The genome of the social amoeba Dictyostelium discoideum.</title>
        <authorList>
            <person name="Eichinger L."/>
            <person name="Pachebat J.A."/>
            <person name="Gloeckner G."/>
            <person name="Rajandream M.A."/>
            <person name="Sucgang R."/>
            <person name="Berriman M."/>
            <person name="Song J."/>
            <person name="Olsen R."/>
            <person name="Szafranski K."/>
            <person name="Xu Q."/>
            <person name="Tunggal B."/>
            <person name="Kummerfeld S."/>
            <person name="Madera M."/>
            <person name="Konfortov B.A."/>
            <person name="Rivero F."/>
            <person name="Bankier A.T."/>
            <person name="Lehmann R."/>
            <person name="Hamlin N."/>
            <person name="Davies R."/>
            <person name="Gaudet P."/>
            <person name="Fey P."/>
            <person name="Pilcher K."/>
            <person name="Chen G."/>
            <person name="Saunders D."/>
            <person name="Sodergren E.J."/>
            <person name="Davis P."/>
            <person name="Kerhornou A."/>
            <person name="Nie X."/>
            <person name="Hall N."/>
            <person name="Anjard C."/>
            <person name="Hemphill L."/>
            <person name="Bason N."/>
            <person name="Farbrother P."/>
            <person name="Desany B."/>
            <person name="Just E."/>
            <person name="Morio T."/>
            <person name="Rost R."/>
            <person name="Churcher C.M."/>
            <person name="Cooper J."/>
            <person name="Haydock S."/>
            <person name="van Driessche N."/>
            <person name="Cronin A."/>
            <person name="Goodhead I."/>
            <person name="Muzny D.M."/>
            <person name="Mourier T."/>
            <person name="Pain A."/>
            <person name="Lu M."/>
            <person name="Harper D."/>
            <person name="Lindsay R."/>
            <person name="Hauser H."/>
            <person name="James K.D."/>
            <person name="Quiles M."/>
            <person name="Madan Babu M."/>
            <person name="Saito T."/>
            <person name="Buchrieser C."/>
            <person name="Wardroper A."/>
            <person name="Felder M."/>
            <person name="Thangavelu M."/>
            <person name="Johnson D."/>
            <person name="Knights A."/>
            <person name="Loulseged H."/>
            <person name="Mungall K.L."/>
            <person name="Oliver K."/>
            <person name="Price C."/>
            <person name="Quail M.A."/>
            <person name="Urushihara H."/>
            <person name="Hernandez J."/>
            <person name="Rabbinowitsch E."/>
            <person name="Steffen D."/>
            <person name="Sanders M."/>
            <person name="Ma J."/>
            <person name="Kohara Y."/>
            <person name="Sharp S."/>
            <person name="Simmonds M.N."/>
            <person name="Spiegler S."/>
            <person name="Tivey A."/>
            <person name="Sugano S."/>
            <person name="White B."/>
            <person name="Walker D."/>
            <person name="Woodward J.R."/>
            <person name="Winckler T."/>
            <person name="Tanaka Y."/>
            <person name="Shaulsky G."/>
            <person name="Schleicher M."/>
            <person name="Weinstock G.M."/>
            <person name="Rosenthal A."/>
            <person name="Cox E.C."/>
            <person name="Chisholm R.L."/>
            <person name="Gibbs R.A."/>
            <person name="Loomis W.F."/>
            <person name="Platzer M."/>
            <person name="Kay R.R."/>
            <person name="Williams J.G."/>
            <person name="Dear P.H."/>
            <person name="Noegel A.A."/>
            <person name="Barrell B.G."/>
            <person name="Kuspa A."/>
        </authorList>
    </citation>
    <scope>NUCLEOTIDE SEQUENCE [LARGE SCALE GENOMIC DNA]</scope>
    <source>
        <strain>AX4</strain>
    </source>
</reference>
<keyword id="KW-0067">ATP-binding</keyword>
<keyword id="KW-0235">DNA replication</keyword>
<keyword id="KW-0238">DNA-binding</keyword>
<keyword id="KW-0547">Nucleotide-binding</keyword>
<keyword id="KW-0539">Nucleus</keyword>
<keyword id="KW-1185">Reference proteome</keyword>
<name>ORC4_DICDI</name>
<proteinExistence type="inferred from homology"/>
<sequence length="440" mass="50744">MSNIDETENQEYLLLKAKNIITERTQSSYLPDEYIGAEKEAETLYAILDDAIINKKSTVGLITGPKGSGKSSFFKHCLKKYNESDYLLVRLSGMIHFNDNYALKEIAKALGIKIPSGLNIFHTFEFIRVKLGKETLESQINTSTKKIQFQSLPVVILIEELELMLTSLSTSKQSLFYNLLDLSHYKNVSLSFIATTSQHDIVNMFEKRIKSRFTQESIKIPPLSFDSIQIIFKNLISLPESFDDEEYRDTWNANVEKSLKSTSVIENFKKYYRLYNRVNNYHLLVNEIIDNLDYYDKDNKWINSKIINDGFEYLNQDVIEIMLKSLSVLEFTILGCILNTKVGTNINDDYITFDELYDGEYKKLSYSFFKNVDQAKKPSTIRILQHLLLLGIIKTQSRANDSGDFPKFKIAIDPDSIINAAKNRNDLPTVIVKYVTEWLT</sequence>
<comment type="function">
    <text evidence="1">Component of the origin recognition complex (ORC) that binds origins of replication. DNA-binding is ATP-dependent, however specific DNA sequences that define origins of replication have not been identified so far. ORC is required to assemble the pre-replication complex necessary to initiate DNA replication (By similarity).</text>
</comment>
<comment type="subunit">
    <text evidence="1">ORC is composed of six subunits.</text>
</comment>
<comment type="subcellular location">
    <subcellularLocation>
        <location evidence="1">Nucleus</location>
    </subcellularLocation>
</comment>
<comment type="similarity">
    <text evidence="3">Belongs to the ORC4 family.</text>
</comment>
<feature type="chain" id="PRO_0000328602" description="Origin recognition complex subunit 4">
    <location>
        <begin position="1"/>
        <end position="440"/>
    </location>
</feature>
<feature type="binding site" evidence="2">
    <location>
        <begin position="64"/>
        <end position="71"/>
    </location>
    <ligand>
        <name>ATP</name>
        <dbReference type="ChEBI" id="CHEBI:30616"/>
    </ligand>
</feature>
<organism>
    <name type="scientific">Dictyostelium discoideum</name>
    <name type="common">Social amoeba</name>
    <dbReference type="NCBI Taxonomy" id="44689"/>
    <lineage>
        <taxon>Eukaryota</taxon>
        <taxon>Amoebozoa</taxon>
        <taxon>Evosea</taxon>
        <taxon>Eumycetozoa</taxon>
        <taxon>Dictyostelia</taxon>
        <taxon>Dictyosteliales</taxon>
        <taxon>Dictyosteliaceae</taxon>
        <taxon>Dictyostelium</taxon>
    </lineage>
</organism>